<sequence length="118" mass="13748">MLLKSTTRHIRLYTAEIKNSELVPSDNVLTLDVDPDNEFNWGEDSLQKVYRKFDELVESYSGQDLTDYNLRRIGSDLEHFIRSLLQKGDISYNLQSRVLNYSMGLPKVESPETEGKYR</sequence>
<evidence type="ECO:0000255" key="1">
    <source>
        <dbReference type="HAMAP-Rule" id="MF_01352"/>
    </source>
</evidence>
<keyword id="KW-0472">Membrane</keyword>
<keyword id="KW-0520">NAD</keyword>
<keyword id="KW-0521">NADP</keyword>
<keyword id="KW-0618">Plastoquinone</keyword>
<keyword id="KW-0874">Quinone</keyword>
<keyword id="KW-1185">Reference proteome</keyword>
<keyword id="KW-0793">Thylakoid</keyword>
<keyword id="KW-1278">Translocase</keyword>
<keyword id="KW-0813">Transport</keyword>
<feature type="chain" id="PRO_1000143673" description="NAD(P)H-quinone oxidoreductase subunit M">
    <location>
        <begin position="1"/>
        <end position="118"/>
    </location>
</feature>
<gene>
    <name evidence="1" type="primary">ndhM</name>
    <name type="ordered locus">PCC8801_2043</name>
</gene>
<organism>
    <name type="scientific">Rippkaea orientalis (strain PCC 8801 / RF-1)</name>
    <name type="common">Cyanothece sp. (strain PCC 8801)</name>
    <dbReference type="NCBI Taxonomy" id="41431"/>
    <lineage>
        <taxon>Bacteria</taxon>
        <taxon>Bacillati</taxon>
        <taxon>Cyanobacteriota</taxon>
        <taxon>Cyanophyceae</taxon>
        <taxon>Oscillatoriophycideae</taxon>
        <taxon>Chroococcales</taxon>
        <taxon>Aphanothecaceae</taxon>
        <taxon>Rippkaea</taxon>
        <taxon>Rippkaea orientalis</taxon>
    </lineage>
</organism>
<dbReference type="EC" id="7.1.1.-" evidence="1"/>
<dbReference type="EMBL" id="CP001287">
    <property type="protein sequence ID" value="ACK66077.1"/>
    <property type="molecule type" value="Genomic_DNA"/>
</dbReference>
<dbReference type="RefSeq" id="WP_012595346.1">
    <property type="nucleotide sequence ID" value="NC_011726.1"/>
</dbReference>
<dbReference type="SMR" id="B7JZ00"/>
<dbReference type="STRING" id="41431.PCC8801_2043"/>
<dbReference type="KEGG" id="cyp:PCC8801_2043"/>
<dbReference type="eggNOG" id="ENOG5031AQM">
    <property type="taxonomic scope" value="Bacteria"/>
</dbReference>
<dbReference type="HOGENOM" id="CLU_137431_0_0_3"/>
<dbReference type="OrthoDB" id="461686at2"/>
<dbReference type="Proteomes" id="UP000008204">
    <property type="component" value="Chromosome"/>
</dbReference>
<dbReference type="GO" id="GO:0031676">
    <property type="term" value="C:plasma membrane-derived thylakoid membrane"/>
    <property type="evidence" value="ECO:0007669"/>
    <property type="project" value="UniProtKB-SubCell"/>
</dbReference>
<dbReference type="GO" id="GO:0016655">
    <property type="term" value="F:oxidoreductase activity, acting on NAD(P)H, quinone or similar compound as acceptor"/>
    <property type="evidence" value="ECO:0007669"/>
    <property type="project" value="UniProtKB-UniRule"/>
</dbReference>
<dbReference type="GO" id="GO:0048038">
    <property type="term" value="F:quinone binding"/>
    <property type="evidence" value="ECO:0007669"/>
    <property type="project" value="UniProtKB-KW"/>
</dbReference>
<dbReference type="HAMAP" id="MF_01352">
    <property type="entry name" value="NDH1_NDH1M"/>
    <property type="match status" value="1"/>
</dbReference>
<dbReference type="InterPro" id="IPR018922">
    <property type="entry name" value="NdhM"/>
</dbReference>
<dbReference type="PANTHER" id="PTHR36900">
    <property type="entry name" value="NAD(P)H-QUINONE OXIDOREDUCTASE SUBUNIT M, CHLOROPLASTIC"/>
    <property type="match status" value="1"/>
</dbReference>
<dbReference type="PANTHER" id="PTHR36900:SF1">
    <property type="entry name" value="NAD(P)H-QUINONE OXIDOREDUCTASE SUBUNIT M, CHLOROPLASTIC"/>
    <property type="match status" value="1"/>
</dbReference>
<dbReference type="Pfam" id="PF10664">
    <property type="entry name" value="NdhM"/>
    <property type="match status" value="1"/>
</dbReference>
<proteinExistence type="inferred from homology"/>
<protein>
    <recommendedName>
        <fullName evidence="1">NAD(P)H-quinone oxidoreductase subunit M</fullName>
        <ecNumber evidence="1">7.1.1.-</ecNumber>
    </recommendedName>
    <alternativeName>
        <fullName evidence="1">NAD(P)H dehydrogenase I subunit M</fullName>
        <shortName evidence="1">NDH-1 subunit M</shortName>
        <shortName evidence="1">NDH-M</shortName>
    </alternativeName>
</protein>
<comment type="function">
    <text evidence="1">NDH-1 shuttles electrons from an unknown electron donor, via FMN and iron-sulfur (Fe-S) centers, to quinones in the respiratory and/or the photosynthetic chain. The immediate electron acceptor for the enzyme in this species is believed to be plastoquinone. Couples the redox reaction to proton translocation, and thus conserves the redox energy in a proton gradient. Cyanobacterial NDH-1 also plays a role in inorganic carbon-concentration.</text>
</comment>
<comment type="catalytic activity">
    <reaction evidence="1">
        <text>a plastoquinone + NADH + (n+1) H(+)(in) = a plastoquinol + NAD(+) + n H(+)(out)</text>
        <dbReference type="Rhea" id="RHEA:42608"/>
        <dbReference type="Rhea" id="RHEA-COMP:9561"/>
        <dbReference type="Rhea" id="RHEA-COMP:9562"/>
        <dbReference type="ChEBI" id="CHEBI:15378"/>
        <dbReference type="ChEBI" id="CHEBI:17757"/>
        <dbReference type="ChEBI" id="CHEBI:57540"/>
        <dbReference type="ChEBI" id="CHEBI:57945"/>
        <dbReference type="ChEBI" id="CHEBI:62192"/>
    </reaction>
</comment>
<comment type="catalytic activity">
    <reaction evidence="1">
        <text>a plastoquinone + NADPH + (n+1) H(+)(in) = a plastoquinol + NADP(+) + n H(+)(out)</text>
        <dbReference type="Rhea" id="RHEA:42612"/>
        <dbReference type="Rhea" id="RHEA-COMP:9561"/>
        <dbReference type="Rhea" id="RHEA-COMP:9562"/>
        <dbReference type="ChEBI" id="CHEBI:15378"/>
        <dbReference type="ChEBI" id="CHEBI:17757"/>
        <dbReference type="ChEBI" id="CHEBI:57783"/>
        <dbReference type="ChEBI" id="CHEBI:58349"/>
        <dbReference type="ChEBI" id="CHEBI:62192"/>
    </reaction>
</comment>
<comment type="subunit">
    <text evidence="1">NDH-1 can be composed of about 15 different subunits; different subcomplexes with different compositions have been identified which probably have different functions.</text>
</comment>
<comment type="subcellular location">
    <subcellularLocation>
        <location evidence="1">Cellular thylakoid membrane</location>
        <topology evidence="1">Peripheral membrane protein</topology>
        <orientation evidence="1">Cytoplasmic side</orientation>
    </subcellularLocation>
</comment>
<comment type="similarity">
    <text evidence="1">Belongs to the complex I NdhM subunit family.</text>
</comment>
<accession>B7JZ00</accession>
<reference key="1">
    <citation type="journal article" date="2011" name="MBio">
        <title>Novel metabolic attributes of the genus Cyanothece, comprising a group of unicellular nitrogen-fixing Cyanobacteria.</title>
        <authorList>
            <person name="Bandyopadhyay A."/>
            <person name="Elvitigala T."/>
            <person name="Welsh E."/>
            <person name="Stockel J."/>
            <person name="Liberton M."/>
            <person name="Min H."/>
            <person name="Sherman L.A."/>
            <person name="Pakrasi H.B."/>
        </authorList>
    </citation>
    <scope>NUCLEOTIDE SEQUENCE [LARGE SCALE GENOMIC DNA]</scope>
    <source>
        <strain>PCC 8801 / RF-1</strain>
    </source>
</reference>
<name>NDHM_RIPO1</name>